<name>BLC_VIBCH</name>
<keyword id="KW-0998">Cell outer membrane</keyword>
<keyword id="KW-0446">Lipid-binding</keyword>
<keyword id="KW-0449">Lipoprotein</keyword>
<keyword id="KW-0472">Membrane</keyword>
<keyword id="KW-0564">Palmitate</keyword>
<keyword id="KW-1185">Reference proteome</keyword>
<keyword id="KW-0732">Signal</keyword>
<sequence length="171" mass="19686">MRAIFLILCSVLLNGCLGMPESVKPVSDFELNNYLGKWYEVARLDHSFERGLSQVTAEYRVRNDGGISVLNRGYSEEKGEWKEAEGKAYFVNGSTDGYLKVSFFGPFYGSYVVFELDRENYSYAFVSGPNTEYLWLLSRTPTVERGILDKFIEMSKERGFDTNRLIYVQQQ</sequence>
<accession>Q08790</accession>
<accession>O31025</accession>
<accession>O31027</accession>
<accession>Q9KML7</accession>
<dbReference type="EMBL" id="X64097">
    <property type="protein sequence ID" value="CAA45443.1"/>
    <property type="molecule type" value="Genomic_DNA"/>
</dbReference>
<dbReference type="EMBL" id="AF025662">
    <property type="protein sequence ID" value="AAB81982.1"/>
    <property type="molecule type" value="Genomic_DNA"/>
</dbReference>
<dbReference type="EMBL" id="AF025663">
    <property type="protein sequence ID" value="AAB81984.1"/>
    <property type="molecule type" value="Genomic_DNA"/>
</dbReference>
<dbReference type="EMBL" id="AE003853">
    <property type="protein sequence ID" value="AAF96225.1"/>
    <property type="molecule type" value="Genomic_DNA"/>
</dbReference>
<dbReference type="PIR" id="G82474">
    <property type="entry name" value="G82474"/>
</dbReference>
<dbReference type="PIR" id="S37731">
    <property type="entry name" value="S37731"/>
</dbReference>
<dbReference type="RefSeq" id="NP_232713.1">
    <property type="nucleotide sequence ID" value="NC_002506.1"/>
</dbReference>
<dbReference type="RefSeq" id="WP_001201520.1">
    <property type="nucleotide sequence ID" value="NZ_LT906615.1"/>
</dbReference>
<dbReference type="SMR" id="Q08790"/>
<dbReference type="STRING" id="243277.VC_A0317"/>
<dbReference type="DNASU" id="2612408"/>
<dbReference type="EnsemblBacteria" id="AAF96225">
    <property type="protein sequence ID" value="AAF96225"/>
    <property type="gene ID" value="VC_A0317"/>
</dbReference>
<dbReference type="KEGG" id="vch:VC_A0317"/>
<dbReference type="PATRIC" id="fig|243277.26.peg.2952"/>
<dbReference type="eggNOG" id="COG3040">
    <property type="taxonomic scope" value="Bacteria"/>
</dbReference>
<dbReference type="HOGENOM" id="CLU_068449_3_0_6"/>
<dbReference type="Proteomes" id="UP000000584">
    <property type="component" value="Chromosome 2"/>
</dbReference>
<dbReference type="GO" id="GO:0009279">
    <property type="term" value="C:cell outer membrane"/>
    <property type="evidence" value="ECO:0007669"/>
    <property type="project" value="UniProtKB-SubCell"/>
</dbReference>
<dbReference type="GO" id="GO:0008289">
    <property type="term" value="F:lipid binding"/>
    <property type="evidence" value="ECO:0007669"/>
    <property type="project" value="UniProtKB-KW"/>
</dbReference>
<dbReference type="GO" id="GO:0006950">
    <property type="term" value="P:response to stress"/>
    <property type="evidence" value="ECO:0007669"/>
    <property type="project" value="UniProtKB-ARBA"/>
</dbReference>
<dbReference type="CDD" id="cd19438">
    <property type="entry name" value="lipocalin_Blc-like"/>
    <property type="match status" value="1"/>
</dbReference>
<dbReference type="FunFam" id="2.40.128.20:FF:000002">
    <property type="entry name" value="Outer membrane lipoprotein Blc"/>
    <property type="match status" value="1"/>
</dbReference>
<dbReference type="Gene3D" id="2.40.128.20">
    <property type="match status" value="1"/>
</dbReference>
<dbReference type="InterPro" id="IPR012674">
    <property type="entry name" value="Calycin"/>
</dbReference>
<dbReference type="InterPro" id="IPR022271">
    <property type="entry name" value="Lipocalin_ApoD"/>
</dbReference>
<dbReference type="InterPro" id="IPR002446">
    <property type="entry name" value="Lipocalin_bac"/>
</dbReference>
<dbReference type="InterPro" id="IPR047202">
    <property type="entry name" value="Lipocalin_Blc-like_dom"/>
</dbReference>
<dbReference type="InterPro" id="IPR022272">
    <property type="entry name" value="Lipocalin_CS"/>
</dbReference>
<dbReference type="InterPro" id="IPR000566">
    <property type="entry name" value="Lipocln_cytosolic_FA-bd_dom"/>
</dbReference>
<dbReference type="PANTHER" id="PTHR10612">
    <property type="entry name" value="APOLIPOPROTEIN D"/>
    <property type="match status" value="1"/>
</dbReference>
<dbReference type="PANTHER" id="PTHR10612:SF34">
    <property type="entry name" value="APOLIPOPROTEIN D"/>
    <property type="match status" value="1"/>
</dbReference>
<dbReference type="Pfam" id="PF08212">
    <property type="entry name" value="Lipocalin_2"/>
    <property type="match status" value="1"/>
</dbReference>
<dbReference type="PIRSF" id="PIRSF036893">
    <property type="entry name" value="Lipocalin_ApoD"/>
    <property type="match status" value="1"/>
</dbReference>
<dbReference type="PRINTS" id="PR01171">
    <property type="entry name" value="BCTLIPOCALIN"/>
</dbReference>
<dbReference type="SUPFAM" id="SSF50814">
    <property type="entry name" value="Lipocalins"/>
    <property type="match status" value="1"/>
</dbReference>
<dbReference type="PROSITE" id="PS00213">
    <property type="entry name" value="LIPOCALIN"/>
    <property type="match status" value="1"/>
</dbReference>
<protein>
    <recommendedName>
        <fullName>Outer membrane lipoprotein Blc</fullName>
    </recommendedName>
    <alternativeName>
        <fullName>Protein Vlp</fullName>
    </alternativeName>
</protein>
<comment type="function">
    <text evidence="1">Involved in the storage or transport of lipids necessary for membrane maintenance under stressful conditions. Displays a binding preference for lysophospholipids (By similarity).</text>
</comment>
<comment type="subunit">
    <text evidence="1">Homodimer.</text>
</comment>
<comment type="subcellular location">
    <subcellularLocation>
        <location evidence="1">Cell outer membrane</location>
        <topology evidence="1">Lipid-anchor</topology>
    </subcellularLocation>
</comment>
<comment type="similarity">
    <text evidence="2">Belongs to the calycin superfamily. Lipocalin family.</text>
</comment>
<gene>
    <name type="primary">blc</name>
    <name type="synonym">vlp</name>
    <name type="synonym">vlpA</name>
    <name type="ordered locus">VC_A0317</name>
</gene>
<evidence type="ECO:0000250" key="1"/>
<evidence type="ECO:0000305" key="2"/>
<organism>
    <name type="scientific">Vibrio cholerae serotype O1 (strain ATCC 39315 / El Tor Inaba N16961)</name>
    <dbReference type="NCBI Taxonomy" id="243277"/>
    <lineage>
        <taxon>Bacteria</taxon>
        <taxon>Pseudomonadati</taxon>
        <taxon>Pseudomonadota</taxon>
        <taxon>Gammaproteobacteria</taxon>
        <taxon>Vibrionales</taxon>
        <taxon>Vibrionaceae</taxon>
        <taxon>Vibrio</taxon>
    </lineage>
</organism>
<feature type="signal peptide" evidence="2">
    <location>
        <begin position="1"/>
        <end position="15"/>
    </location>
</feature>
<feature type="chain" id="PRO_0000017993" description="Outer membrane lipoprotein Blc">
    <location>
        <begin position="16"/>
        <end position="171"/>
    </location>
</feature>
<feature type="lipid moiety-binding region" description="N-palmitoyl cysteine" evidence="2">
    <location>
        <position position="16"/>
    </location>
</feature>
<feature type="lipid moiety-binding region" description="S-diacylglycerol cysteine" evidence="2">
    <location>
        <position position="16"/>
    </location>
</feature>
<feature type="sequence variant" description="In strain: N16961.">
    <original>S</original>
    <variation>A</variation>
    <location>
        <position position="10"/>
    </location>
</feature>
<feature type="sequence variant" description="In strain: O17.">
    <original>S</original>
    <variation>L</variation>
    <location>
        <position position="68"/>
    </location>
</feature>
<feature type="sequence conflict" description="In Ref. 2; AAB81982/AAB81984." evidence="2" ref="2">
    <original>R</original>
    <variation>K</variation>
    <location>
        <position position="50"/>
    </location>
</feature>
<feature type="sequence conflict" description="In Ref. 1; CAA45443." evidence="2" ref="1">
    <original>Q</original>
    <variation>L</variation>
    <location>
        <position position="170"/>
    </location>
</feature>
<proteinExistence type="inferred from homology"/>
<reference key="1">
    <citation type="journal article" date="1993" name="Infect. Immun.">
        <title>Nucleotide sequence encoding the mannose-fucose-resistant hemagglutinin of Vibrio cholerae O1 and construction of a mutant.</title>
        <authorList>
            <person name="Franzon V.L."/>
            <person name="Barker A."/>
            <person name="Manning P.A."/>
        </authorList>
    </citation>
    <scope>NUCLEOTIDE SEQUENCE [GENOMIC DNA]</scope>
    <source>
        <strain>ATCC 25870 / Classical Inaba 569B / Serotype O1</strain>
    </source>
</reference>
<reference key="2">
    <citation type="submission" date="1997-09" db="EMBL/GenBank/DDBJ databases">
        <authorList>
            <person name="Kaewrakon P."/>
            <person name="Manning P.A."/>
        </authorList>
    </citation>
    <scope>NUCLEOTIDE SEQUENCE [GENOMIC DNA]</scope>
    <source>
        <strain>ATCC 25870 / Classical Inaba 569B / Serotype O1</strain>
        <strain>El Tor O17 / Serotype O1</strain>
    </source>
</reference>
<reference key="3">
    <citation type="journal article" date="2000" name="Nature">
        <title>DNA sequence of both chromosomes of the cholera pathogen Vibrio cholerae.</title>
        <authorList>
            <person name="Heidelberg J.F."/>
            <person name="Eisen J.A."/>
            <person name="Nelson W.C."/>
            <person name="Clayton R.A."/>
            <person name="Gwinn M.L."/>
            <person name="Dodson R.J."/>
            <person name="Haft D.H."/>
            <person name="Hickey E.K."/>
            <person name="Peterson J.D."/>
            <person name="Umayam L.A."/>
            <person name="Gill S.R."/>
            <person name="Nelson K.E."/>
            <person name="Read T.D."/>
            <person name="Tettelin H."/>
            <person name="Richardson D.L."/>
            <person name="Ermolaeva M.D."/>
            <person name="Vamathevan J.J."/>
            <person name="Bass S."/>
            <person name="Qin H."/>
            <person name="Dragoi I."/>
            <person name="Sellers P."/>
            <person name="McDonald L.A."/>
            <person name="Utterback T.R."/>
            <person name="Fleischmann R.D."/>
            <person name="Nierman W.C."/>
            <person name="White O."/>
            <person name="Salzberg S.L."/>
            <person name="Smith H.O."/>
            <person name="Colwell R.R."/>
            <person name="Mekalanos J.J."/>
            <person name="Venter J.C."/>
            <person name="Fraser C.M."/>
        </authorList>
    </citation>
    <scope>NUCLEOTIDE SEQUENCE [LARGE SCALE GENOMIC DNA]</scope>
    <source>
        <strain>ATCC 39315 / El Tor Inaba N16961</strain>
    </source>
</reference>